<protein>
    <recommendedName>
        <fullName evidence="1">NAD(P)H-quinone oxidoreductase subunit J, chloroplastic</fullName>
        <ecNumber evidence="1">7.1.1.-</ecNumber>
    </recommendedName>
    <alternativeName>
        <fullName>NAD(P)H dehydrogenase subunit J</fullName>
    </alternativeName>
    <alternativeName>
        <fullName evidence="1">NADH-plastoquinone oxidoreductase subunit J</fullName>
    </alternativeName>
</protein>
<accession>Q19V88</accession>
<name>NDHJ_CHLAT</name>
<feature type="chain" id="PRO_0000358253" description="NAD(P)H-quinone oxidoreductase subunit J, chloroplastic">
    <location>
        <begin position="1"/>
        <end position="195"/>
    </location>
</feature>
<geneLocation type="chloroplast"/>
<comment type="function">
    <text evidence="1">NDH shuttles electrons from NAD(P)H:plastoquinone, via FMN and iron-sulfur (Fe-S) centers, to quinones in the photosynthetic chain and possibly in a chloroplast respiratory chain. The immediate electron acceptor for the enzyme in this species is believed to be plastoquinone. Couples the redox reaction to proton translocation, and thus conserves the redox energy in a proton gradient.</text>
</comment>
<comment type="catalytic activity">
    <reaction evidence="1">
        <text>a plastoquinone + NADH + (n+1) H(+)(in) = a plastoquinol + NAD(+) + n H(+)(out)</text>
        <dbReference type="Rhea" id="RHEA:42608"/>
        <dbReference type="Rhea" id="RHEA-COMP:9561"/>
        <dbReference type="Rhea" id="RHEA-COMP:9562"/>
        <dbReference type="ChEBI" id="CHEBI:15378"/>
        <dbReference type="ChEBI" id="CHEBI:17757"/>
        <dbReference type="ChEBI" id="CHEBI:57540"/>
        <dbReference type="ChEBI" id="CHEBI:57945"/>
        <dbReference type="ChEBI" id="CHEBI:62192"/>
    </reaction>
</comment>
<comment type="catalytic activity">
    <reaction evidence="1">
        <text>a plastoquinone + NADPH + (n+1) H(+)(in) = a plastoquinol + NADP(+) + n H(+)(out)</text>
        <dbReference type="Rhea" id="RHEA:42612"/>
        <dbReference type="Rhea" id="RHEA-COMP:9561"/>
        <dbReference type="Rhea" id="RHEA-COMP:9562"/>
        <dbReference type="ChEBI" id="CHEBI:15378"/>
        <dbReference type="ChEBI" id="CHEBI:17757"/>
        <dbReference type="ChEBI" id="CHEBI:57783"/>
        <dbReference type="ChEBI" id="CHEBI:58349"/>
        <dbReference type="ChEBI" id="CHEBI:62192"/>
    </reaction>
</comment>
<comment type="subunit">
    <text evidence="1">NDH is composed of at least 16 different subunits, 5 of which are encoded in the nucleus.</text>
</comment>
<comment type="subcellular location">
    <subcellularLocation>
        <location evidence="1">Plastid</location>
        <location evidence="1">Chloroplast thylakoid membrane</location>
        <topology evidence="1">Peripheral membrane protein</topology>
        <orientation evidence="1">Stromal side</orientation>
    </subcellularLocation>
</comment>
<comment type="similarity">
    <text evidence="1">Belongs to the complex I 30 kDa subunit family.</text>
</comment>
<evidence type="ECO:0000255" key="1">
    <source>
        <dbReference type="HAMAP-Rule" id="MF_01357"/>
    </source>
</evidence>
<dbReference type="EC" id="7.1.1.-" evidence="1"/>
<dbReference type="EMBL" id="DQ422812">
    <property type="protein sequence ID" value="ABD62198.2"/>
    <property type="molecule type" value="Genomic_DNA"/>
</dbReference>
<dbReference type="RefSeq" id="YP_001019117.2">
    <property type="nucleotide sequence ID" value="NC_008822.1"/>
</dbReference>
<dbReference type="SMR" id="Q19V88"/>
<dbReference type="GeneID" id="4783262"/>
<dbReference type="GO" id="GO:0009535">
    <property type="term" value="C:chloroplast thylakoid membrane"/>
    <property type="evidence" value="ECO:0007669"/>
    <property type="project" value="UniProtKB-SubCell"/>
</dbReference>
<dbReference type="GO" id="GO:0008137">
    <property type="term" value="F:NADH dehydrogenase (ubiquinone) activity"/>
    <property type="evidence" value="ECO:0007669"/>
    <property type="project" value="InterPro"/>
</dbReference>
<dbReference type="GO" id="GO:0048038">
    <property type="term" value="F:quinone binding"/>
    <property type="evidence" value="ECO:0007669"/>
    <property type="project" value="UniProtKB-KW"/>
</dbReference>
<dbReference type="GO" id="GO:0019684">
    <property type="term" value="P:photosynthesis, light reaction"/>
    <property type="evidence" value="ECO:0007669"/>
    <property type="project" value="UniProtKB-UniRule"/>
</dbReference>
<dbReference type="Gene3D" id="3.30.460.80">
    <property type="entry name" value="NADH:ubiquinone oxidoreductase, 30kDa subunit"/>
    <property type="match status" value="1"/>
</dbReference>
<dbReference type="HAMAP" id="MF_01357">
    <property type="entry name" value="NDH1_NuoC"/>
    <property type="match status" value="1"/>
</dbReference>
<dbReference type="InterPro" id="IPR010218">
    <property type="entry name" value="NADH_DH_suC"/>
</dbReference>
<dbReference type="InterPro" id="IPR037232">
    <property type="entry name" value="NADH_quin_OxRdtase_su_C/D-like"/>
</dbReference>
<dbReference type="InterPro" id="IPR001268">
    <property type="entry name" value="NADH_UbQ_OxRdtase_30kDa_su"/>
</dbReference>
<dbReference type="InterPro" id="IPR020396">
    <property type="entry name" value="NADH_UbQ_OxRdtase_CS"/>
</dbReference>
<dbReference type="NCBIfam" id="NF009141">
    <property type="entry name" value="PRK12494.1"/>
    <property type="match status" value="1"/>
</dbReference>
<dbReference type="PANTHER" id="PTHR10884:SF14">
    <property type="entry name" value="NADH DEHYDROGENASE [UBIQUINONE] IRON-SULFUR PROTEIN 3, MITOCHONDRIAL"/>
    <property type="match status" value="1"/>
</dbReference>
<dbReference type="PANTHER" id="PTHR10884">
    <property type="entry name" value="NADH DEHYDROGENASE UBIQUINONE IRON-SULFUR PROTEIN 3"/>
    <property type="match status" value="1"/>
</dbReference>
<dbReference type="Pfam" id="PF00329">
    <property type="entry name" value="Complex1_30kDa"/>
    <property type="match status" value="1"/>
</dbReference>
<dbReference type="SUPFAM" id="SSF143243">
    <property type="entry name" value="Nqo5-like"/>
    <property type="match status" value="1"/>
</dbReference>
<dbReference type="PROSITE" id="PS00542">
    <property type="entry name" value="COMPLEX1_30K"/>
    <property type="match status" value="1"/>
</dbReference>
<gene>
    <name evidence="1" type="primary">ndhJ</name>
</gene>
<keyword id="KW-0150">Chloroplast</keyword>
<keyword id="KW-0472">Membrane</keyword>
<keyword id="KW-0520">NAD</keyword>
<keyword id="KW-0521">NADP</keyword>
<keyword id="KW-0934">Plastid</keyword>
<keyword id="KW-0618">Plastoquinone</keyword>
<keyword id="KW-0874">Quinone</keyword>
<keyword id="KW-0793">Thylakoid</keyword>
<keyword id="KW-1278">Translocase</keyword>
<keyword id="KW-0813">Transport</keyword>
<sequence>MKNNEKVSDSFLTSSGKELSEATPSASSYTTVVRDKNIKGVVSNWLAEMKLRHKPLGFDYQGVEILEVKPEDLTSVAIALYAYGFNYLRNQCAYDVSPGGNLASVYHLTKLDADVDQPQEVCLKVFLPRENPRVPSVFWIWKTADFQERESYDMFGIYYEGHPHLKRILMPENWVGWPLRKDYITPDFFELQDAY</sequence>
<organism>
    <name type="scientific">Chlorokybus atmophyticus</name>
    <name type="common">Soil alga</name>
    <dbReference type="NCBI Taxonomy" id="3144"/>
    <lineage>
        <taxon>Eukaryota</taxon>
        <taxon>Viridiplantae</taxon>
        <taxon>Streptophyta</taxon>
        <taxon>Chlorokybophyceae</taxon>
        <taxon>Chlorokybales</taxon>
        <taxon>Chlorokybaceae</taxon>
        <taxon>Chlorokybus</taxon>
    </lineage>
</organism>
<reference key="1">
    <citation type="journal article" date="2007" name="BMC Biol.">
        <title>A clade uniting the green algae Mesostigma viride and Chlorokybus atmophyticus represents the deepest branch of the Streptophyta in chloroplast genome-based phylogenies.</title>
        <authorList>
            <person name="Lemieux C."/>
            <person name="Otis C."/>
            <person name="Turmel M."/>
        </authorList>
    </citation>
    <scope>NUCLEOTIDE SEQUENCE [LARGE SCALE GENOMIC DNA]</scope>
    <source>
        <strain>SAG 48.80</strain>
    </source>
</reference>
<proteinExistence type="inferred from homology"/>